<accession>O34643</accession>
<accession>Q795E0</accession>
<proteinExistence type="predicted"/>
<evidence type="ECO:0000255" key="1">
    <source>
        <dbReference type="PROSITE-ProRule" id="PRU00335"/>
    </source>
</evidence>
<dbReference type="EMBL" id="AF017113">
    <property type="protein sequence ID" value="AAC67267.1"/>
    <property type="molecule type" value="Genomic_DNA"/>
</dbReference>
<dbReference type="EMBL" id="AL009126">
    <property type="protein sequence ID" value="CAB15537.1"/>
    <property type="molecule type" value="Genomic_DNA"/>
</dbReference>
<dbReference type="PIR" id="H70042">
    <property type="entry name" value="H70042"/>
</dbReference>
<dbReference type="RefSeq" id="NP_391400.1">
    <property type="nucleotide sequence ID" value="NC_000964.3"/>
</dbReference>
<dbReference type="RefSeq" id="WP_003244088.1">
    <property type="nucleotide sequence ID" value="NZ_OZ025638.1"/>
</dbReference>
<dbReference type="SMR" id="O34643"/>
<dbReference type="FunCoup" id="O34643">
    <property type="interactions" value="39"/>
</dbReference>
<dbReference type="STRING" id="224308.BSU35200"/>
<dbReference type="PaxDb" id="224308-BSU35200"/>
<dbReference type="EnsemblBacteria" id="CAB15537">
    <property type="protein sequence ID" value="CAB15537"/>
    <property type="gene ID" value="BSU_35200"/>
</dbReference>
<dbReference type="GeneID" id="936683"/>
<dbReference type="KEGG" id="bsu:BSU35200"/>
<dbReference type="PATRIC" id="fig|224308.179.peg.3810"/>
<dbReference type="eggNOG" id="COG1309">
    <property type="taxonomic scope" value="Bacteria"/>
</dbReference>
<dbReference type="InParanoid" id="O34643"/>
<dbReference type="OrthoDB" id="277085at2"/>
<dbReference type="PhylomeDB" id="O34643"/>
<dbReference type="BioCyc" id="BSUB:BSU35200-MONOMER"/>
<dbReference type="Proteomes" id="UP000001570">
    <property type="component" value="Chromosome"/>
</dbReference>
<dbReference type="GO" id="GO:0003700">
    <property type="term" value="F:DNA-binding transcription factor activity"/>
    <property type="evidence" value="ECO:0000318"/>
    <property type="project" value="GO_Central"/>
</dbReference>
<dbReference type="GO" id="GO:0000976">
    <property type="term" value="F:transcription cis-regulatory region binding"/>
    <property type="evidence" value="ECO:0000318"/>
    <property type="project" value="GO_Central"/>
</dbReference>
<dbReference type="GO" id="GO:0006355">
    <property type="term" value="P:regulation of DNA-templated transcription"/>
    <property type="evidence" value="ECO:0000318"/>
    <property type="project" value="GO_Central"/>
</dbReference>
<dbReference type="Gene3D" id="1.10.357.10">
    <property type="entry name" value="Tetracycline Repressor, domain 2"/>
    <property type="match status" value="1"/>
</dbReference>
<dbReference type="InterPro" id="IPR009057">
    <property type="entry name" value="Homeodomain-like_sf"/>
</dbReference>
<dbReference type="InterPro" id="IPR050624">
    <property type="entry name" value="HTH-type_Tx_Regulator"/>
</dbReference>
<dbReference type="InterPro" id="IPR001647">
    <property type="entry name" value="HTH_TetR"/>
</dbReference>
<dbReference type="PANTHER" id="PTHR43479">
    <property type="entry name" value="ACREF/ENVCD OPERON REPRESSOR-RELATED"/>
    <property type="match status" value="1"/>
</dbReference>
<dbReference type="PANTHER" id="PTHR43479:SF11">
    <property type="entry name" value="ACREF_ENVCD OPERON REPRESSOR-RELATED"/>
    <property type="match status" value="1"/>
</dbReference>
<dbReference type="Pfam" id="PF00440">
    <property type="entry name" value="TetR_N"/>
    <property type="match status" value="1"/>
</dbReference>
<dbReference type="PRINTS" id="PR00455">
    <property type="entry name" value="HTHTETR"/>
</dbReference>
<dbReference type="SUPFAM" id="SSF46689">
    <property type="entry name" value="Homeodomain-like"/>
    <property type="match status" value="1"/>
</dbReference>
<dbReference type="PROSITE" id="PS50977">
    <property type="entry name" value="HTH_TETR_2"/>
    <property type="match status" value="1"/>
</dbReference>
<gene>
    <name type="primary">yvkB</name>
    <name type="ordered locus">BSU35200</name>
</gene>
<organism>
    <name type="scientific">Bacillus subtilis (strain 168)</name>
    <dbReference type="NCBI Taxonomy" id="224308"/>
    <lineage>
        <taxon>Bacteria</taxon>
        <taxon>Bacillati</taxon>
        <taxon>Bacillota</taxon>
        <taxon>Bacilli</taxon>
        <taxon>Bacillales</taxon>
        <taxon>Bacillaceae</taxon>
        <taxon>Bacillus</taxon>
    </lineage>
</organism>
<reference key="1">
    <citation type="submission" date="1997-08" db="EMBL/GenBank/DDBJ databases">
        <title>Nucleotide sequence of the 300-304 chromosomal segment of Bacillus subtilis.</title>
        <authorList>
            <person name="Lazarevic V."/>
            <person name="Soldo B."/>
            <person name="Rivolta C."/>
            <person name="Reynolds S."/>
            <person name="Mauel C."/>
            <person name="Karamata D."/>
        </authorList>
    </citation>
    <scope>NUCLEOTIDE SEQUENCE [GENOMIC DNA]</scope>
</reference>
<reference key="2">
    <citation type="journal article" date="1997" name="Nature">
        <title>The complete genome sequence of the Gram-positive bacterium Bacillus subtilis.</title>
        <authorList>
            <person name="Kunst F."/>
            <person name="Ogasawara N."/>
            <person name="Moszer I."/>
            <person name="Albertini A.M."/>
            <person name="Alloni G."/>
            <person name="Azevedo V."/>
            <person name="Bertero M.G."/>
            <person name="Bessieres P."/>
            <person name="Bolotin A."/>
            <person name="Borchert S."/>
            <person name="Borriss R."/>
            <person name="Boursier L."/>
            <person name="Brans A."/>
            <person name="Braun M."/>
            <person name="Brignell S.C."/>
            <person name="Bron S."/>
            <person name="Brouillet S."/>
            <person name="Bruschi C.V."/>
            <person name="Caldwell B."/>
            <person name="Capuano V."/>
            <person name="Carter N.M."/>
            <person name="Choi S.-K."/>
            <person name="Codani J.-J."/>
            <person name="Connerton I.F."/>
            <person name="Cummings N.J."/>
            <person name="Daniel R.A."/>
            <person name="Denizot F."/>
            <person name="Devine K.M."/>
            <person name="Duesterhoeft A."/>
            <person name="Ehrlich S.D."/>
            <person name="Emmerson P.T."/>
            <person name="Entian K.-D."/>
            <person name="Errington J."/>
            <person name="Fabret C."/>
            <person name="Ferrari E."/>
            <person name="Foulger D."/>
            <person name="Fritz C."/>
            <person name="Fujita M."/>
            <person name="Fujita Y."/>
            <person name="Fuma S."/>
            <person name="Galizzi A."/>
            <person name="Galleron N."/>
            <person name="Ghim S.-Y."/>
            <person name="Glaser P."/>
            <person name="Goffeau A."/>
            <person name="Golightly E.J."/>
            <person name="Grandi G."/>
            <person name="Guiseppi G."/>
            <person name="Guy B.J."/>
            <person name="Haga K."/>
            <person name="Haiech J."/>
            <person name="Harwood C.R."/>
            <person name="Henaut A."/>
            <person name="Hilbert H."/>
            <person name="Holsappel S."/>
            <person name="Hosono S."/>
            <person name="Hullo M.-F."/>
            <person name="Itaya M."/>
            <person name="Jones L.-M."/>
            <person name="Joris B."/>
            <person name="Karamata D."/>
            <person name="Kasahara Y."/>
            <person name="Klaerr-Blanchard M."/>
            <person name="Klein C."/>
            <person name="Kobayashi Y."/>
            <person name="Koetter P."/>
            <person name="Koningstein G."/>
            <person name="Krogh S."/>
            <person name="Kumano M."/>
            <person name="Kurita K."/>
            <person name="Lapidus A."/>
            <person name="Lardinois S."/>
            <person name="Lauber J."/>
            <person name="Lazarevic V."/>
            <person name="Lee S.-M."/>
            <person name="Levine A."/>
            <person name="Liu H."/>
            <person name="Masuda S."/>
            <person name="Mauel C."/>
            <person name="Medigue C."/>
            <person name="Medina N."/>
            <person name="Mellado R.P."/>
            <person name="Mizuno M."/>
            <person name="Moestl D."/>
            <person name="Nakai S."/>
            <person name="Noback M."/>
            <person name="Noone D."/>
            <person name="O'Reilly M."/>
            <person name="Ogawa K."/>
            <person name="Ogiwara A."/>
            <person name="Oudega B."/>
            <person name="Park S.-H."/>
            <person name="Parro V."/>
            <person name="Pohl T.M."/>
            <person name="Portetelle D."/>
            <person name="Porwollik S."/>
            <person name="Prescott A.M."/>
            <person name="Presecan E."/>
            <person name="Pujic P."/>
            <person name="Purnelle B."/>
            <person name="Rapoport G."/>
            <person name="Rey M."/>
            <person name="Reynolds S."/>
            <person name="Rieger M."/>
            <person name="Rivolta C."/>
            <person name="Rocha E."/>
            <person name="Roche B."/>
            <person name="Rose M."/>
            <person name="Sadaie Y."/>
            <person name="Sato T."/>
            <person name="Scanlan E."/>
            <person name="Schleich S."/>
            <person name="Schroeter R."/>
            <person name="Scoffone F."/>
            <person name="Sekiguchi J."/>
            <person name="Sekowska A."/>
            <person name="Seror S.J."/>
            <person name="Serror P."/>
            <person name="Shin B.-S."/>
            <person name="Soldo B."/>
            <person name="Sorokin A."/>
            <person name="Tacconi E."/>
            <person name="Takagi T."/>
            <person name="Takahashi H."/>
            <person name="Takemaru K."/>
            <person name="Takeuchi M."/>
            <person name="Tamakoshi A."/>
            <person name="Tanaka T."/>
            <person name="Terpstra P."/>
            <person name="Tognoni A."/>
            <person name="Tosato V."/>
            <person name="Uchiyama S."/>
            <person name="Vandenbol M."/>
            <person name="Vannier F."/>
            <person name="Vassarotti A."/>
            <person name="Viari A."/>
            <person name="Wambutt R."/>
            <person name="Wedler E."/>
            <person name="Wedler H."/>
            <person name="Weitzenegger T."/>
            <person name="Winters P."/>
            <person name="Wipat A."/>
            <person name="Yamamoto H."/>
            <person name="Yamane K."/>
            <person name="Yasumoto K."/>
            <person name="Yata K."/>
            <person name="Yoshida K."/>
            <person name="Yoshikawa H.-F."/>
            <person name="Zumstein E."/>
            <person name="Yoshikawa H."/>
            <person name="Danchin A."/>
        </authorList>
    </citation>
    <scope>NUCLEOTIDE SEQUENCE [LARGE SCALE GENOMIC DNA]</scope>
    <source>
        <strain>168</strain>
    </source>
</reference>
<reference key="3">
    <citation type="journal article" date="2005" name="Microbiol. Mol. Biol. Rev.">
        <title>The TetR family of transcriptional repressors.</title>
        <authorList>
            <person name="Ramos J.L."/>
            <person name="Martinez-Bueno M."/>
            <person name="Molina-Henares A.J."/>
            <person name="Teran W."/>
            <person name="Watanabe K."/>
            <person name="Zhang X."/>
            <person name="Gallegos M.T."/>
            <person name="Brennan R."/>
            <person name="Tobes R."/>
        </authorList>
    </citation>
    <scope>REVIEW</scope>
    <scope>GENE FAMILY</scope>
</reference>
<name>YVKB_BACSU</name>
<keyword id="KW-0238">DNA-binding</keyword>
<keyword id="KW-1185">Reference proteome</keyword>
<keyword id="KW-0678">Repressor</keyword>
<keyword id="KW-0804">Transcription</keyword>
<keyword id="KW-0805">Transcription regulation</keyword>
<protein>
    <recommendedName>
        <fullName>Uncharacterized HTH-type transcriptional regulator YvkB</fullName>
    </recommendedName>
</protein>
<feature type="chain" id="PRO_0000360713" description="Uncharacterized HTH-type transcriptional regulator YvkB">
    <location>
        <begin position="1"/>
        <end position="189"/>
    </location>
</feature>
<feature type="domain" description="HTH tetR-type" evidence="1">
    <location>
        <begin position="2"/>
        <end position="62"/>
    </location>
</feature>
<feature type="DNA-binding region" description="H-T-H motif" evidence="1">
    <location>
        <begin position="25"/>
        <end position="44"/>
    </location>
</feature>
<sequence>MRPTNKRILDAAMQLLVKKGYRATTTKEIAEKANVSEATIFRNFKNKQGLVEALLSQHSSNRGSILEQTEGDLYKDLLHIGTCLLEELEHRKDIIKISFREPAMFQDVINHVTEYPQSMKQLLVDYLKTMGEKGVIQTGNEAEHADVFMSIIFGYFIHRLHLGDRVISMPQEKMLEHSTALFVKGISAD</sequence>